<dbReference type="EC" id="3.6.5.-" evidence="1"/>
<dbReference type="EMBL" id="AE004439">
    <property type="protein sequence ID" value="AAK02435.1"/>
    <property type="molecule type" value="Genomic_DNA"/>
</dbReference>
<dbReference type="SMR" id="Q9CNS4"/>
<dbReference type="STRING" id="272843.PM0351"/>
<dbReference type="EnsemblBacteria" id="AAK02435">
    <property type="protein sequence ID" value="AAK02435"/>
    <property type="gene ID" value="PM0351"/>
</dbReference>
<dbReference type="KEGG" id="pmu:PM0351"/>
<dbReference type="HOGENOM" id="CLU_011747_2_0_6"/>
<dbReference type="OrthoDB" id="9807318at2"/>
<dbReference type="Proteomes" id="UP000000809">
    <property type="component" value="Chromosome"/>
</dbReference>
<dbReference type="GO" id="GO:0005737">
    <property type="term" value="C:cytoplasm"/>
    <property type="evidence" value="ECO:0007669"/>
    <property type="project" value="UniProtKB-SubCell"/>
</dbReference>
<dbReference type="GO" id="GO:0005525">
    <property type="term" value="F:GTP binding"/>
    <property type="evidence" value="ECO:0007669"/>
    <property type="project" value="UniProtKB-UniRule"/>
</dbReference>
<dbReference type="GO" id="GO:0003924">
    <property type="term" value="F:GTPase activity"/>
    <property type="evidence" value="ECO:0007669"/>
    <property type="project" value="UniProtKB-UniRule"/>
</dbReference>
<dbReference type="GO" id="GO:0000287">
    <property type="term" value="F:magnesium ion binding"/>
    <property type="evidence" value="ECO:0007669"/>
    <property type="project" value="InterPro"/>
</dbReference>
<dbReference type="GO" id="GO:0042254">
    <property type="term" value="P:ribosome biogenesis"/>
    <property type="evidence" value="ECO:0007669"/>
    <property type="project" value="UniProtKB-UniRule"/>
</dbReference>
<dbReference type="CDD" id="cd01898">
    <property type="entry name" value="Obg"/>
    <property type="match status" value="1"/>
</dbReference>
<dbReference type="FunFam" id="2.70.210.12:FF:000001">
    <property type="entry name" value="GTPase Obg"/>
    <property type="match status" value="1"/>
</dbReference>
<dbReference type="FunFam" id="3.40.50.300:FF:000185">
    <property type="entry name" value="GTPase Obg"/>
    <property type="match status" value="1"/>
</dbReference>
<dbReference type="Gene3D" id="2.70.210.12">
    <property type="entry name" value="GTP1/OBG domain"/>
    <property type="match status" value="1"/>
</dbReference>
<dbReference type="Gene3D" id="3.40.50.300">
    <property type="entry name" value="P-loop containing nucleotide triphosphate hydrolases"/>
    <property type="match status" value="1"/>
</dbReference>
<dbReference type="HAMAP" id="MF_01454">
    <property type="entry name" value="GTPase_Obg"/>
    <property type="match status" value="1"/>
</dbReference>
<dbReference type="InterPro" id="IPR031167">
    <property type="entry name" value="G_OBG"/>
</dbReference>
<dbReference type="InterPro" id="IPR006073">
    <property type="entry name" value="GTP-bd"/>
</dbReference>
<dbReference type="InterPro" id="IPR014100">
    <property type="entry name" value="GTP-bd_Obg/CgtA"/>
</dbReference>
<dbReference type="InterPro" id="IPR006074">
    <property type="entry name" value="GTP1-OBG_CS"/>
</dbReference>
<dbReference type="InterPro" id="IPR006169">
    <property type="entry name" value="GTP1_OBG_dom"/>
</dbReference>
<dbReference type="InterPro" id="IPR036726">
    <property type="entry name" value="GTP1_OBG_dom_sf"/>
</dbReference>
<dbReference type="InterPro" id="IPR045086">
    <property type="entry name" value="OBG_GTPase"/>
</dbReference>
<dbReference type="InterPro" id="IPR027417">
    <property type="entry name" value="P-loop_NTPase"/>
</dbReference>
<dbReference type="NCBIfam" id="TIGR02729">
    <property type="entry name" value="Obg_CgtA"/>
    <property type="match status" value="1"/>
</dbReference>
<dbReference type="NCBIfam" id="NF008955">
    <property type="entry name" value="PRK12297.1"/>
    <property type="match status" value="1"/>
</dbReference>
<dbReference type="NCBIfam" id="NF008956">
    <property type="entry name" value="PRK12299.1"/>
    <property type="match status" value="1"/>
</dbReference>
<dbReference type="PANTHER" id="PTHR11702">
    <property type="entry name" value="DEVELOPMENTALLY REGULATED GTP-BINDING PROTEIN-RELATED"/>
    <property type="match status" value="1"/>
</dbReference>
<dbReference type="PANTHER" id="PTHR11702:SF31">
    <property type="entry name" value="MITOCHONDRIAL RIBOSOME-ASSOCIATED GTPASE 2"/>
    <property type="match status" value="1"/>
</dbReference>
<dbReference type="Pfam" id="PF01018">
    <property type="entry name" value="GTP1_OBG"/>
    <property type="match status" value="1"/>
</dbReference>
<dbReference type="Pfam" id="PF01926">
    <property type="entry name" value="MMR_HSR1"/>
    <property type="match status" value="1"/>
</dbReference>
<dbReference type="PIRSF" id="PIRSF002401">
    <property type="entry name" value="GTP_bd_Obg/CgtA"/>
    <property type="match status" value="1"/>
</dbReference>
<dbReference type="PRINTS" id="PR00326">
    <property type="entry name" value="GTP1OBG"/>
</dbReference>
<dbReference type="SUPFAM" id="SSF82051">
    <property type="entry name" value="Obg GTP-binding protein N-terminal domain"/>
    <property type="match status" value="1"/>
</dbReference>
<dbReference type="SUPFAM" id="SSF52540">
    <property type="entry name" value="P-loop containing nucleoside triphosphate hydrolases"/>
    <property type="match status" value="1"/>
</dbReference>
<dbReference type="PROSITE" id="PS51710">
    <property type="entry name" value="G_OBG"/>
    <property type="match status" value="1"/>
</dbReference>
<dbReference type="PROSITE" id="PS00905">
    <property type="entry name" value="GTP1_OBG"/>
    <property type="match status" value="1"/>
</dbReference>
<dbReference type="PROSITE" id="PS51883">
    <property type="entry name" value="OBG"/>
    <property type="match status" value="1"/>
</dbReference>
<name>OBG_PASMU</name>
<sequence>MKFIDEALIRVEAGDGGNGCVSFRREKYIPKGGPDGGDGGDGGDVYLVADENLNTLIDYRFEKRFAAGRGENGRSAGCTGHRGNDITLRVPVGTRAIDNDTKEVLGDLTKHGAKMLVAKGGYHGLGNTRFKSSVNRAPRQKTNGTPGEKRDLQLELMLLADVGMLGLPNAGKSTFIRAVSAAKPKVADYPFTTLVPSLGVVRVDENHSFVVADIPGLIEGAAEGAGLGVRFLKHLERCRVLIHLVDIAPIDESDPAENISIIESELFQYSEALADKPRWLVFNKIDTMSDEEAHERAQAITERLGWDDDYYLISAVTGKNVQPLCRDIMDFIEANPRHEVEQTADEAEVKFKWDDYHQAQLADHQFEDEDEDWDDWSEEDEEGVETIYKP</sequence>
<organism>
    <name type="scientific">Pasteurella multocida (strain Pm70)</name>
    <dbReference type="NCBI Taxonomy" id="272843"/>
    <lineage>
        <taxon>Bacteria</taxon>
        <taxon>Pseudomonadati</taxon>
        <taxon>Pseudomonadota</taxon>
        <taxon>Gammaproteobacteria</taxon>
        <taxon>Pasteurellales</taxon>
        <taxon>Pasteurellaceae</taxon>
        <taxon>Pasteurella</taxon>
    </lineage>
</organism>
<evidence type="ECO:0000255" key="1">
    <source>
        <dbReference type="HAMAP-Rule" id="MF_01454"/>
    </source>
</evidence>
<evidence type="ECO:0000255" key="2">
    <source>
        <dbReference type="PROSITE-ProRule" id="PRU01231"/>
    </source>
</evidence>
<evidence type="ECO:0000256" key="3">
    <source>
        <dbReference type="SAM" id="MobiDB-lite"/>
    </source>
</evidence>
<proteinExistence type="inferred from homology"/>
<protein>
    <recommendedName>
        <fullName evidence="1">GTPase Obg</fullName>
        <ecNumber evidence="1">3.6.5.-</ecNumber>
    </recommendedName>
    <alternativeName>
        <fullName evidence="1">GTP-binding protein Obg</fullName>
    </alternativeName>
</protein>
<reference key="1">
    <citation type="journal article" date="2001" name="Proc. Natl. Acad. Sci. U.S.A.">
        <title>Complete genomic sequence of Pasteurella multocida Pm70.</title>
        <authorList>
            <person name="May B.J."/>
            <person name="Zhang Q."/>
            <person name="Li L.L."/>
            <person name="Paustian M.L."/>
            <person name="Whittam T.S."/>
            <person name="Kapur V."/>
        </authorList>
    </citation>
    <scope>NUCLEOTIDE SEQUENCE [LARGE SCALE GENOMIC DNA]</scope>
    <source>
        <strain>Pm70</strain>
    </source>
</reference>
<comment type="function">
    <text evidence="1">An essential GTPase which binds GTP, GDP and possibly (p)ppGpp with moderate affinity, with high nucleotide exchange rates and a fairly low GTP hydrolysis rate. Plays a role in control of the cell cycle, stress response, ribosome biogenesis and in those bacteria that undergo differentiation, in morphogenesis control.</text>
</comment>
<comment type="cofactor">
    <cofactor evidence="1">
        <name>Mg(2+)</name>
        <dbReference type="ChEBI" id="CHEBI:18420"/>
    </cofactor>
</comment>
<comment type="subunit">
    <text evidence="1">Monomer.</text>
</comment>
<comment type="subcellular location">
    <subcellularLocation>
        <location evidence="1">Cytoplasm</location>
    </subcellularLocation>
</comment>
<comment type="similarity">
    <text evidence="1">Belongs to the TRAFAC class OBG-HflX-like GTPase superfamily. OBG GTPase family.</text>
</comment>
<gene>
    <name evidence="1" type="primary">obg</name>
    <name type="ordered locus">PM0351</name>
</gene>
<feature type="chain" id="PRO_0000386110" description="GTPase Obg">
    <location>
        <begin position="1"/>
        <end position="390"/>
    </location>
</feature>
<feature type="domain" description="Obg" evidence="2">
    <location>
        <begin position="1"/>
        <end position="159"/>
    </location>
</feature>
<feature type="domain" description="OBG-type G" evidence="1">
    <location>
        <begin position="160"/>
        <end position="333"/>
    </location>
</feature>
<feature type="region of interest" description="Disordered" evidence="3">
    <location>
        <begin position="363"/>
        <end position="390"/>
    </location>
</feature>
<feature type="compositionally biased region" description="Acidic residues" evidence="3">
    <location>
        <begin position="366"/>
        <end position="384"/>
    </location>
</feature>
<feature type="binding site" evidence="1">
    <location>
        <begin position="166"/>
        <end position="173"/>
    </location>
    <ligand>
        <name>GTP</name>
        <dbReference type="ChEBI" id="CHEBI:37565"/>
    </ligand>
</feature>
<feature type="binding site" evidence="1">
    <location>
        <position position="173"/>
    </location>
    <ligand>
        <name>Mg(2+)</name>
        <dbReference type="ChEBI" id="CHEBI:18420"/>
    </ligand>
</feature>
<feature type="binding site" evidence="1">
    <location>
        <begin position="191"/>
        <end position="195"/>
    </location>
    <ligand>
        <name>GTP</name>
        <dbReference type="ChEBI" id="CHEBI:37565"/>
    </ligand>
</feature>
<feature type="binding site" evidence="1">
    <location>
        <position position="193"/>
    </location>
    <ligand>
        <name>Mg(2+)</name>
        <dbReference type="ChEBI" id="CHEBI:18420"/>
    </ligand>
</feature>
<feature type="binding site" evidence="1">
    <location>
        <begin position="213"/>
        <end position="216"/>
    </location>
    <ligand>
        <name>GTP</name>
        <dbReference type="ChEBI" id="CHEBI:37565"/>
    </ligand>
</feature>
<feature type="binding site" evidence="1">
    <location>
        <begin position="283"/>
        <end position="286"/>
    </location>
    <ligand>
        <name>GTP</name>
        <dbReference type="ChEBI" id="CHEBI:37565"/>
    </ligand>
</feature>
<feature type="binding site" evidence="1">
    <location>
        <begin position="314"/>
        <end position="316"/>
    </location>
    <ligand>
        <name>GTP</name>
        <dbReference type="ChEBI" id="CHEBI:37565"/>
    </ligand>
</feature>
<keyword id="KW-0963">Cytoplasm</keyword>
<keyword id="KW-0342">GTP-binding</keyword>
<keyword id="KW-0378">Hydrolase</keyword>
<keyword id="KW-0460">Magnesium</keyword>
<keyword id="KW-0479">Metal-binding</keyword>
<keyword id="KW-0547">Nucleotide-binding</keyword>
<keyword id="KW-1185">Reference proteome</keyword>
<accession>Q9CNS4</accession>